<keyword id="KW-0066">ATP synthesis</keyword>
<keyword id="KW-1003">Cell membrane</keyword>
<keyword id="KW-0138">CF(0)</keyword>
<keyword id="KW-0375">Hydrogen ion transport</keyword>
<keyword id="KW-0406">Ion transport</keyword>
<keyword id="KW-0472">Membrane</keyword>
<keyword id="KW-0812">Transmembrane</keyword>
<keyword id="KW-1133">Transmembrane helix</keyword>
<keyword id="KW-0813">Transport</keyword>
<gene>
    <name evidence="2" type="primary">atpB</name>
    <name type="ordered locus">SA1911</name>
</gene>
<accession>Q7A4E5</accession>
<reference key="1">
    <citation type="journal article" date="2001" name="Lancet">
        <title>Whole genome sequencing of meticillin-resistant Staphylococcus aureus.</title>
        <authorList>
            <person name="Kuroda M."/>
            <person name="Ohta T."/>
            <person name="Uchiyama I."/>
            <person name="Baba T."/>
            <person name="Yuzawa H."/>
            <person name="Kobayashi I."/>
            <person name="Cui L."/>
            <person name="Oguchi A."/>
            <person name="Aoki K."/>
            <person name="Nagai Y."/>
            <person name="Lian J.-Q."/>
            <person name="Ito T."/>
            <person name="Kanamori M."/>
            <person name="Matsumaru H."/>
            <person name="Maruyama A."/>
            <person name="Murakami H."/>
            <person name="Hosoyama A."/>
            <person name="Mizutani-Ui Y."/>
            <person name="Takahashi N.K."/>
            <person name="Sawano T."/>
            <person name="Inoue R."/>
            <person name="Kaito C."/>
            <person name="Sekimizu K."/>
            <person name="Hirakawa H."/>
            <person name="Kuhara S."/>
            <person name="Goto S."/>
            <person name="Yabuzaki J."/>
            <person name="Kanehisa M."/>
            <person name="Yamashita A."/>
            <person name="Oshima K."/>
            <person name="Furuya K."/>
            <person name="Yoshino C."/>
            <person name="Shiba T."/>
            <person name="Hattori M."/>
            <person name="Ogasawara N."/>
            <person name="Hayashi H."/>
            <person name="Hiramatsu K."/>
        </authorList>
    </citation>
    <scope>NUCLEOTIDE SEQUENCE [LARGE SCALE GENOMIC DNA]</scope>
    <source>
        <strain>N315</strain>
    </source>
</reference>
<reference key="2">
    <citation type="journal article" date="2010" name="Genes Dev.">
        <title>Functional microdomains in bacterial membranes.</title>
        <authorList>
            <person name="Lopez D."/>
            <person name="Kolter R."/>
        </authorList>
    </citation>
    <scope>IDENTIFICATION BY MASS SPECTROMETRY</scope>
    <scope>SUBCELLULAR LOCATION</scope>
</reference>
<sequence length="242" mass="27630">MDHKSPLVSWNLFGFDIVFNLSSILMILVTAFLVFLLAIICTRNLKKRPTGKQNFVEWIFDFVRGIIEGNMAWKKGGQFHFLAVTLILYIFIANMLGLPFSIVTKDHTLWWKSPTADATVTLTLSTTIILLTHFYGIKMRGTKQYLKGYVQPFWPLAIINVFEEFTSTLTLGLRLYGNIFAGEILLTLLAGLFFNEPAWGWIISIPGLIVWQAFSIFVGTIQAYIFIMLSMVYMSHKVADEH</sequence>
<proteinExistence type="evidence at protein level"/>
<name>ATP6_STAAN</name>
<dbReference type="EMBL" id="BA000018">
    <property type="protein sequence ID" value="BAB43195.1"/>
    <property type="molecule type" value="Genomic_DNA"/>
</dbReference>
<dbReference type="PIR" id="B90004">
    <property type="entry name" value="B90004"/>
</dbReference>
<dbReference type="RefSeq" id="WP_000349655.1">
    <property type="nucleotide sequence ID" value="NC_002745.2"/>
</dbReference>
<dbReference type="SMR" id="Q7A4E5"/>
<dbReference type="EnsemblBacteria" id="BAB43195">
    <property type="protein sequence ID" value="BAB43195"/>
    <property type="gene ID" value="BAB43195"/>
</dbReference>
<dbReference type="KEGG" id="sau:SA1911"/>
<dbReference type="HOGENOM" id="CLU_041018_2_3_9"/>
<dbReference type="GO" id="GO:0045121">
    <property type="term" value="C:membrane raft"/>
    <property type="evidence" value="ECO:0007669"/>
    <property type="project" value="UniProtKB-SubCell"/>
</dbReference>
<dbReference type="GO" id="GO:0005886">
    <property type="term" value="C:plasma membrane"/>
    <property type="evidence" value="ECO:0007669"/>
    <property type="project" value="UniProtKB-SubCell"/>
</dbReference>
<dbReference type="GO" id="GO:0045259">
    <property type="term" value="C:proton-transporting ATP synthase complex"/>
    <property type="evidence" value="ECO:0007669"/>
    <property type="project" value="UniProtKB-KW"/>
</dbReference>
<dbReference type="GO" id="GO:0046933">
    <property type="term" value="F:proton-transporting ATP synthase activity, rotational mechanism"/>
    <property type="evidence" value="ECO:0007669"/>
    <property type="project" value="UniProtKB-UniRule"/>
</dbReference>
<dbReference type="GO" id="GO:0042777">
    <property type="term" value="P:proton motive force-driven plasma membrane ATP synthesis"/>
    <property type="evidence" value="ECO:0007669"/>
    <property type="project" value="TreeGrafter"/>
</dbReference>
<dbReference type="CDD" id="cd00310">
    <property type="entry name" value="ATP-synt_Fo_a_6"/>
    <property type="match status" value="1"/>
</dbReference>
<dbReference type="FunFam" id="1.20.120.220:FF:000005">
    <property type="entry name" value="ATP synthase subunit a"/>
    <property type="match status" value="1"/>
</dbReference>
<dbReference type="Gene3D" id="1.20.120.220">
    <property type="entry name" value="ATP synthase, F0 complex, subunit A"/>
    <property type="match status" value="1"/>
</dbReference>
<dbReference type="HAMAP" id="MF_01393">
    <property type="entry name" value="ATP_synth_a_bact"/>
    <property type="match status" value="1"/>
</dbReference>
<dbReference type="InterPro" id="IPR045082">
    <property type="entry name" value="ATP_syn_F0_a_bact/chloroplast"/>
</dbReference>
<dbReference type="InterPro" id="IPR000568">
    <property type="entry name" value="ATP_synth_F0_asu"/>
</dbReference>
<dbReference type="InterPro" id="IPR023011">
    <property type="entry name" value="ATP_synth_F0_asu_AS"/>
</dbReference>
<dbReference type="InterPro" id="IPR035908">
    <property type="entry name" value="F0_ATP_A_sf"/>
</dbReference>
<dbReference type="NCBIfam" id="TIGR01131">
    <property type="entry name" value="ATP_synt_6_or_A"/>
    <property type="match status" value="1"/>
</dbReference>
<dbReference type="NCBIfam" id="NF004479">
    <property type="entry name" value="PRK05815.1-4"/>
    <property type="match status" value="1"/>
</dbReference>
<dbReference type="PANTHER" id="PTHR42823">
    <property type="entry name" value="ATP SYNTHASE SUBUNIT A, CHLOROPLASTIC"/>
    <property type="match status" value="1"/>
</dbReference>
<dbReference type="PANTHER" id="PTHR42823:SF3">
    <property type="entry name" value="ATP SYNTHASE SUBUNIT A, CHLOROPLASTIC"/>
    <property type="match status" value="1"/>
</dbReference>
<dbReference type="Pfam" id="PF00119">
    <property type="entry name" value="ATP-synt_A"/>
    <property type="match status" value="1"/>
</dbReference>
<dbReference type="PRINTS" id="PR00123">
    <property type="entry name" value="ATPASEA"/>
</dbReference>
<dbReference type="SUPFAM" id="SSF81336">
    <property type="entry name" value="F1F0 ATP synthase subunit A"/>
    <property type="match status" value="1"/>
</dbReference>
<dbReference type="PROSITE" id="PS00449">
    <property type="entry name" value="ATPASE_A"/>
    <property type="match status" value="1"/>
</dbReference>
<comment type="function">
    <text evidence="2">Key component of the proton channel; it plays a direct role in the translocation of protons across the membrane.</text>
</comment>
<comment type="subunit">
    <text evidence="2">F-type ATPases have 2 components, CF(1) - the catalytic core - and CF(0) - the membrane proton channel. CF(1) has five subunits: alpha(3), beta(3), gamma(1), delta(1), epsilon(1). CF(0) has three main subunits: a(1), b(2) and c(9-12). The alpha and beta chains form an alternating ring which encloses part of the gamma chain. CF(1) is attached to CF(0) by a central stalk formed by the gamma and epsilon chains, while a peripheral stalk is formed by the delta and b chains.</text>
</comment>
<comment type="subcellular location">
    <subcellularLocation>
        <location evidence="2 3">Cell membrane</location>
        <topology evidence="2">Multi-pass membrane protein</topology>
    </subcellularLocation>
    <subcellularLocation>
        <location evidence="3">Membrane raft</location>
        <topology evidence="1">Multi-pass membrane protein</topology>
    </subcellularLocation>
    <text evidence="3">Present in detergent-resistant membrane (DRM) fractions that may be equivalent to eukaryotic membrane rafts; these rafts include proteins involved in signaling, molecule trafficking and protein secretion.</text>
</comment>
<comment type="similarity">
    <text evidence="2">Belongs to the ATPase A chain family.</text>
</comment>
<evidence type="ECO:0000255" key="1"/>
<evidence type="ECO:0000255" key="2">
    <source>
        <dbReference type="HAMAP-Rule" id="MF_01393"/>
    </source>
</evidence>
<evidence type="ECO:0000269" key="3">
    <source>
    </source>
</evidence>
<organism>
    <name type="scientific">Staphylococcus aureus (strain N315)</name>
    <dbReference type="NCBI Taxonomy" id="158879"/>
    <lineage>
        <taxon>Bacteria</taxon>
        <taxon>Bacillati</taxon>
        <taxon>Bacillota</taxon>
        <taxon>Bacilli</taxon>
        <taxon>Bacillales</taxon>
        <taxon>Staphylococcaceae</taxon>
        <taxon>Staphylococcus</taxon>
    </lineage>
</organism>
<feature type="chain" id="PRO_1000145313" description="ATP synthase subunit a">
    <location>
        <begin position="1"/>
        <end position="242"/>
    </location>
</feature>
<feature type="transmembrane region" description="Helical" evidence="2">
    <location>
        <begin position="21"/>
        <end position="41"/>
    </location>
</feature>
<feature type="transmembrane region" description="Helical" evidence="2">
    <location>
        <begin position="83"/>
        <end position="103"/>
    </location>
</feature>
<feature type="transmembrane region" description="Helical" evidence="2">
    <location>
        <begin position="117"/>
        <end position="137"/>
    </location>
</feature>
<feature type="transmembrane region" description="Helical" evidence="2">
    <location>
        <begin position="175"/>
        <end position="195"/>
    </location>
</feature>
<feature type="transmembrane region" description="Helical" evidence="2">
    <location>
        <begin position="198"/>
        <end position="218"/>
    </location>
</feature>
<protein>
    <recommendedName>
        <fullName evidence="2">ATP synthase subunit a</fullName>
    </recommendedName>
    <alternativeName>
        <fullName evidence="2">ATP synthase F0 sector subunit a</fullName>
    </alternativeName>
    <alternativeName>
        <fullName evidence="2">F-ATPase subunit 6</fullName>
    </alternativeName>
</protein>